<organism>
    <name type="scientific">Herminiimonas arsenicoxydans</name>
    <dbReference type="NCBI Taxonomy" id="204773"/>
    <lineage>
        <taxon>Bacteria</taxon>
        <taxon>Pseudomonadati</taxon>
        <taxon>Pseudomonadota</taxon>
        <taxon>Betaproteobacteria</taxon>
        <taxon>Burkholderiales</taxon>
        <taxon>Oxalobacteraceae</taxon>
        <taxon>Herminiimonas</taxon>
    </lineage>
</organism>
<accession>A4G5P1</accession>
<keyword id="KW-0093">Biotin biosynthesis</keyword>
<keyword id="KW-0489">Methyltransferase</keyword>
<keyword id="KW-1185">Reference proteome</keyword>
<keyword id="KW-0949">S-adenosyl-L-methionine</keyword>
<keyword id="KW-0808">Transferase</keyword>
<protein>
    <recommendedName>
        <fullName evidence="1">Malonyl-[acyl-carrier protein] O-methyltransferase</fullName>
        <shortName evidence="1">Malonyl-ACP O-methyltransferase</shortName>
        <ecNumber evidence="1">2.1.1.197</ecNumber>
    </recommendedName>
    <alternativeName>
        <fullName evidence="1">Biotin synthesis protein BioC</fullName>
    </alternativeName>
</protein>
<gene>
    <name evidence="1" type="primary">bioC</name>
    <name type="ordered locus">HEAR1671</name>
</gene>
<comment type="function">
    <text evidence="1">Converts the free carboxyl group of a malonyl-thioester to its methyl ester by transfer of a methyl group from S-adenosyl-L-methionine (SAM). It allows to synthesize pimeloyl-ACP via the fatty acid synthetic pathway.</text>
</comment>
<comment type="catalytic activity">
    <reaction evidence="1">
        <text>malonyl-[ACP] + S-adenosyl-L-methionine = malonyl-[ACP] methyl ester + S-adenosyl-L-homocysteine</text>
        <dbReference type="Rhea" id="RHEA:17105"/>
        <dbReference type="Rhea" id="RHEA-COMP:9623"/>
        <dbReference type="Rhea" id="RHEA-COMP:9954"/>
        <dbReference type="ChEBI" id="CHEBI:57856"/>
        <dbReference type="ChEBI" id="CHEBI:59789"/>
        <dbReference type="ChEBI" id="CHEBI:78449"/>
        <dbReference type="ChEBI" id="CHEBI:78845"/>
        <dbReference type="EC" id="2.1.1.197"/>
    </reaction>
</comment>
<comment type="pathway">
    <text evidence="1">Cofactor biosynthesis; biotin biosynthesis.</text>
</comment>
<comment type="similarity">
    <text evidence="1">Belongs to the methyltransferase superfamily.</text>
</comment>
<sequence length="260" mass="28618">MPDIDKHKLSLSFSRAAAQYDAIAGFQQQVAARLAQLLPAIPATCVLDGGCGTGTSSALLTRHWPDALLLACDLSPEMVRQAHARQLTAVCGDLEQLPFSKACFDVVWSSLVLQWCQPQLAYPELQRVLKHGGRLLFSTLTSGSLHELESTFGEIDRHRRVLPFASEQQVVDALYAAGFEHVQCQAERWVTQHADLKTLLTSIRGIGANQTGAARRPGMMGKTQWQAAQVRYENLRDADGMLPLTYSLLFVSAEKSRAQD</sequence>
<reference key="1">
    <citation type="journal article" date="2007" name="PLoS Genet.">
        <title>A tale of two oxidation states: bacterial colonization of arsenic-rich environments.</title>
        <authorList>
            <person name="Muller D."/>
            <person name="Medigue C."/>
            <person name="Koechler S."/>
            <person name="Barbe V."/>
            <person name="Barakat M."/>
            <person name="Talla E."/>
            <person name="Bonnefoy V."/>
            <person name="Krin E."/>
            <person name="Arsene-Ploetze F."/>
            <person name="Carapito C."/>
            <person name="Chandler M."/>
            <person name="Cournoyer B."/>
            <person name="Cruveiller S."/>
            <person name="Dossat C."/>
            <person name="Duval S."/>
            <person name="Heymann M."/>
            <person name="Leize E."/>
            <person name="Lieutaud A."/>
            <person name="Lievremont D."/>
            <person name="Makita Y."/>
            <person name="Mangenot S."/>
            <person name="Nitschke W."/>
            <person name="Ortet P."/>
            <person name="Perdrial N."/>
            <person name="Schoepp B."/>
            <person name="Siguier P."/>
            <person name="Simeonova D.D."/>
            <person name="Rouy Z."/>
            <person name="Segurens B."/>
            <person name="Turlin E."/>
            <person name="Vallenet D."/>
            <person name="van Dorsselaer A."/>
            <person name="Weiss S."/>
            <person name="Weissenbach J."/>
            <person name="Lett M.-C."/>
            <person name="Danchin A."/>
            <person name="Bertin P.N."/>
        </authorList>
    </citation>
    <scope>NUCLEOTIDE SEQUENCE [LARGE SCALE GENOMIC DNA]</scope>
    <source>
        <strain>ULPAs1</strain>
    </source>
</reference>
<dbReference type="EC" id="2.1.1.197" evidence="1"/>
<dbReference type="EMBL" id="CU207211">
    <property type="protein sequence ID" value="CAL61828.1"/>
    <property type="molecule type" value="Genomic_DNA"/>
</dbReference>
<dbReference type="SMR" id="A4G5P1"/>
<dbReference type="STRING" id="204773.HEAR1671"/>
<dbReference type="KEGG" id="har:HEAR1671"/>
<dbReference type="eggNOG" id="COG2226">
    <property type="taxonomic scope" value="Bacteria"/>
</dbReference>
<dbReference type="HOGENOM" id="CLU_046586_2_2_4"/>
<dbReference type="UniPathway" id="UPA00078"/>
<dbReference type="Proteomes" id="UP000006697">
    <property type="component" value="Chromosome"/>
</dbReference>
<dbReference type="GO" id="GO:0010340">
    <property type="term" value="F:carboxyl-O-methyltransferase activity"/>
    <property type="evidence" value="ECO:0007669"/>
    <property type="project" value="UniProtKB-UniRule"/>
</dbReference>
<dbReference type="GO" id="GO:0102130">
    <property type="term" value="F:malonyl-CoA methyltransferase activity"/>
    <property type="evidence" value="ECO:0007669"/>
    <property type="project" value="UniProtKB-EC"/>
</dbReference>
<dbReference type="GO" id="GO:0008757">
    <property type="term" value="F:S-adenosylmethionine-dependent methyltransferase activity"/>
    <property type="evidence" value="ECO:0007669"/>
    <property type="project" value="InterPro"/>
</dbReference>
<dbReference type="GO" id="GO:0009102">
    <property type="term" value="P:biotin biosynthetic process"/>
    <property type="evidence" value="ECO:0007669"/>
    <property type="project" value="UniProtKB-UniRule"/>
</dbReference>
<dbReference type="GO" id="GO:0032259">
    <property type="term" value="P:methylation"/>
    <property type="evidence" value="ECO:0007669"/>
    <property type="project" value="UniProtKB-KW"/>
</dbReference>
<dbReference type="CDD" id="cd02440">
    <property type="entry name" value="AdoMet_MTases"/>
    <property type="match status" value="1"/>
</dbReference>
<dbReference type="Gene3D" id="3.40.50.150">
    <property type="entry name" value="Vaccinia Virus protein VP39"/>
    <property type="match status" value="1"/>
</dbReference>
<dbReference type="HAMAP" id="MF_00835">
    <property type="entry name" value="BioC"/>
    <property type="match status" value="1"/>
</dbReference>
<dbReference type="InterPro" id="IPR011814">
    <property type="entry name" value="BioC"/>
</dbReference>
<dbReference type="InterPro" id="IPR050602">
    <property type="entry name" value="Malonyl-ACP_OMT"/>
</dbReference>
<dbReference type="InterPro" id="IPR013216">
    <property type="entry name" value="Methyltransf_11"/>
</dbReference>
<dbReference type="InterPro" id="IPR029063">
    <property type="entry name" value="SAM-dependent_MTases_sf"/>
</dbReference>
<dbReference type="NCBIfam" id="TIGR02072">
    <property type="entry name" value="BioC"/>
    <property type="match status" value="1"/>
</dbReference>
<dbReference type="PANTHER" id="PTHR13090">
    <property type="entry name" value="ARGININE-HYDROXYLASE NDUFAF5, MITOCHONDRIAL"/>
    <property type="match status" value="1"/>
</dbReference>
<dbReference type="PANTHER" id="PTHR13090:SF1">
    <property type="entry name" value="ARGININE-HYDROXYLASE NDUFAF5, MITOCHONDRIAL"/>
    <property type="match status" value="1"/>
</dbReference>
<dbReference type="Pfam" id="PF08241">
    <property type="entry name" value="Methyltransf_11"/>
    <property type="match status" value="1"/>
</dbReference>
<dbReference type="SUPFAM" id="SSF53335">
    <property type="entry name" value="S-adenosyl-L-methionine-dependent methyltransferases"/>
    <property type="match status" value="1"/>
</dbReference>
<name>BIOC_HERAR</name>
<feature type="chain" id="PRO_0000412504" description="Malonyl-[acyl-carrier protein] O-methyltransferase">
    <location>
        <begin position="1"/>
        <end position="260"/>
    </location>
</feature>
<proteinExistence type="inferred from homology"/>
<evidence type="ECO:0000255" key="1">
    <source>
        <dbReference type="HAMAP-Rule" id="MF_00835"/>
    </source>
</evidence>